<accession>B4EU40</accession>
<protein>
    <recommendedName>
        <fullName evidence="1">Nucleotide-binding protein PMI0103</fullName>
    </recommendedName>
</protein>
<reference key="1">
    <citation type="journal article" date="2008" name="J. Bacteriol.">
        <title>Complete genome sequence of uropathogenic Proteus mirabilis, a master of both adherence and motility.</title>
        <authorList>
            <person name="Pearson M.M."/>
            <person name="Sebaihia M."/>
            <person name="Churcher C."/>
            <person name="Quail M.A."/>
            <person name="Seshasayee A.S."/>
            <person name="Luscombe N.M."/>
            <person name="Abdellah Z."/>
            <person name="Arrosmith C."/>
            <person name="Atkin B."/>
            <person name="Chillingworth T."/>
            <person name="Hauser H."/>
            <person name="Jagels K."/>
            <person name="Moule S."/>
            <person name="Mungall K."/>
            <person name="Norbertczak H."/>
            <person name="Rabbinowitsch E."/>
            <person name="Walker D."/>
            <person name="Whithead S."/>
            <person name="Thomson N.R."/>
            <person name="Rather P.N."/>
            <person name="Parkhill J."/>
            <person name="Mobley H.L.T."/>
        </authorList>
    </citation>
    <scope>NUCLEOTIDE SEQUENCE [LARGE SCALE GENOMIC DNA]</scope>
    <source>
        <strain>HI4320</strain>
    </source>
</reference>
<sequence>MPSFDIVSEVDLHEVRNAVENAQRELTTRWDFRNVEASFELNEKTESVKTTSVSEFQVQQLLDILREKMAKRGIDGAVLNIPEEMTHSGKTYSVEATLKQGIDTPLAKKIVKMIKDSKLKVQAQIQGEQVRVTGKSRDDLQAVMKLVREGELGQPFQFTNFRD</sequence>
<proteinExistence type="inferred from homology"/>
<organism>
    <name type="scientific">Proteus mirabilis (strain HI4320)</name>
    <dbReference type="NCBI Taxonomy" id="529507"/>
    <lineage>
        <taxon>Bacteria</taxon>
        <taxon>Pseudomonadati</taxon>
        <taxon>Pseudomonadota</taxon>
        <taxon>Gammaproteobacteria</taxon>
        <taxon>Enterobacterales</taxon>
        <taxon>Morganellaceae</taxon>
        <taxon>Proteus</taxon>
    </lineage>
</organism>
<dbReference type="EMBL" id="AM942759">
    <property type="protein sequence ID" value="CAR40371.1"/>
    <property type="molecule type" value="Genomic_DNA"/>
</dbReference>
<dbReference type="RefSeq" id="WP_004245110.1">
    <property type="nucleotide sequence ID" value="NC_010554.1"/>
</dbReference>
<dbReference type="SMR" id="B4EU40"/>
<dbReference type="EnsemblBacteria" id="CAR40371">
    <property type="protein sequence ID" value="CAR40371"/>
    <property type="gene ID" value="PMI0103"/>
</dbReference>
<dbReference type="GeneID" id="6803309"/>
<dbReference type="KEGG" id="pmr:PMI0103"/>
<dbReference type="eggNOG" id="COG1666">
    <property type="taxonomic scope" value="Bacteria"/>
</dbReference>
<dbReference type="HOGENOM" id="CLU_099839_1_0_6"/>
<dbReference type="Proteomes" id="UP000008319">
    <property type="component" value="Chromosome"/>
</dbReference>
<dbReference type="GO" id="GO:0005829">
    <property type="term" value="C:cytosol"/>
    <property type="evidence" value="ECO:0007669"/>
    <property type="project" value="TreeGrafter"/>
</dbReference>
<dbReference type="GO" id="GO:0000166">
    <property type="term" value="F:nucleotide binding"/>
    <property type="evidence" value="ECO:0007669"/>
    <property type="project" value="TreeGrafter"/>
</dbReference>
<dbReference type="CDD" id="cd11740">
    <property type="entry name" value="YajQ_like"/>
    <property type="match status" value="1"/>
</dbReference>
<dbReference type="FunFam" id="3.30.70.860:FF:000001">
    <property type="entry name" value="UPF0234 protein YajQ"/>
    <property type="match status" value="1"/>
</dbReference>
<dbReference type="FunFam" id="3.30.70.990:FF:000001">
    <property type="entry name" value="UPF0234 protein YajQ"/>
    <property type="match status" value="1"/>
</dbReference>
<dbReference type="Gene3D" id="3.30.70.860">
    <property type="match status" value="1"/>
</dbReference>
<dbReference type="Gene3D" id="3.30.70.990">
    <property type="entry name" value="YajQ-like, domain 2"/>
    <property type="match status" value="1"/>
</dbReference>
<dbReference type="HAMAP" id="MF_00632">
    <property type="entry name" value="YajQ"/>
    <property type="match status" value="1"/>
</dbReference>
<dbReference type="InterPro" id="IPR007551">
    <property type="entry name" value="DUF520"/>
</dbReference>
<dbReference type="InterPro" id="IPR035571">
    <property type="entry name" value="UPF0234-like_C"/>
</dbReference>
<dbReference type="InterPro" id="IPR035570">
    <property type="entry name" value="UPF0234_N"/>
</dbReference>
<dbReference type="InterPro" id="IPR036183">
    <property type="entry name" value="YajQ-like_sf"/>
</dbReference>
<dbReference type="NCBIfam" id="NF003819">
    <property type="entry name" value="PRK05412.1"/>
    <property type="match status" value="1"/>
</dbReference>
<dbReference type="PANTHER" id="PTHR30476">
    <property type="entry name" value="UPF0234 PROTEIN YAJQ"/>
    <property type="match status" value="1"/>
</dbReference>
<dbReference type="PANTHER" id="PTHR30476:SF0">
    <property type="entry name" value="UPF0234 PROTEIN YAJQ"/>
    <property type="match status" value="1"/>
</dbReference>
<dbReference type="Pfam" id="PF04461">
    <property type="entry name" value="DUF520"/>
    <property type="match status" value="1"/>
</dbReference>
<dbReference type="SUPFAM" id="SSF89963">
    <property type="entry name" value="YajQ-like"/>
    <property type="match status" value="2"/>
</dbReference>
<comment type="function">
    <text evidence="1">Nucleotide-binding protein.</text>
</comment>
<comment type="similarity">
    <text evidence="1">Belongs to the YajQ family.</text>
</comment>
<feature type="chain" id="PRO_1000130640" description="Nucleotide-binding protein PMI0103">
    <location>
        <begin position="1"/>
        <end position="163"/>
    </location>
</feature>
<keyword id="KW-0547">Nucleotide-binding</keyword>
<keyword id="KW-1185">Reference proteome</keyword>
<gene>
    <name type="ordered locus">PMI0103</name>
</gene>
<evidence type="ECO:0000255" key="1">
    <source>
        <dbReference type="HAMAP-Rule" id="MF_00632"/>
    </source>
</evidence>
<name>Y103_PROMH</name>